<name>F16PA_BRUA4</name>
<comment type="catalytic activity">
    <reaction evidence="1">
        <text>beta-D-fructose 1,6-bisphosphate + H2O = beta-D-fructose 6-phosphate + phosphate</text>
        <dbReference type="Rhea" id="RHEA:11064"/>
        <dbReference type="ChEBI" id="CHEBI:15377"/>
        <dbReference type="ChEBI" id="CHEBI:32966"/>
        <dbReference type="ChEBI" id="CHEBI:43474"/>
        <dbReference type="ChEBI" id="CHEBI:57634"/>
        <dbReference type="EC" id="3.1.3.11"/>
    </reaction>
</comment>
<comment type="cofactor">
    <cofactor evidence="1">
        <name>Mg(2+)</name>
        <dbReference type="ChEBI" id="CHEBI:18420"/>
    </cofactor>
    <text evidence="1">Binds 2 magnesium ions per subunit.</text>
</comment>
<comment type="pathway">
    <text evidence="1">Carbohydrate biosynthesis; gluconeogenesis.</text>
</comment>
<comment type="subunit">
    <text evidence="1">Homotetramer.</text>
</comment>
<comment type="subcellular location">
    <subcellularLocation>
        <location evidence="1">Cytoplasm</location>
    </subcellularLocation>
</comment>
<comment type="similarity">
    <text evidence="1">Belongs to the FBPase class 1 family.</text>
</comment>
<reference key="1">
    <citation type="journal article" date="2011" name="J. Bacteriol.">
        <title>Genome of Ochrobactrum anthropi ATCC 49188 T, a versatile opportunistic pathogen and symbiont of several eukaryotic hosts.</title>
        <authorList>
            <person name="Chain P.S."/>
            <person name="Lang D.M."/>
            <person name="Comerci D.J."/>
            <person name="Malfatti S.A."/>
            <person name="Vergez L.M."/>
            <person name="Shin M."/>
            <person name="Ugalde R.A."/>
            <person name="Garcia E."/>
            <person name="Tolmasky M.E."/>
        </authorList>
    </citation>
    <scope>NUCLEOTIDE SEQUENCE [LARGE SCALE GENOMIC DNA]</scope>
    <source>
        <strain>ATCC 49188 / DSM 6882 / CCUG 24695 / JCM 21032 / LMG 3331 / NBRC 15819 / NCTC 12168 / Alc 37</strain>
    </source>
</reference>
<proteinExistence type="inferred from homology"/>
<evidence type="ECO:0000255" key="1">
    <source>
        <dbReference type="HAMAP-Rule" id="MF_01855"/>
    </source>
</evidence>
<dbReference type="EC" id="3.1.3.11" evidence="1"/>
<dbReference type="EMBL" id="CP000759">
    <property type="protein sequence ID" value="ABS15611.1"/>
    <property type="molecule type" value="Genomic_DNA"/>
</dbReference>
<dbReference type="RefSeq" id="WP_011982647.1">
    <property type="nucleotide sequence ID" value="NC_009668.1"/>
</dbReference>
<dbReference type="SMR" id="A6X307"/>
<dbReference type="STRING" id="439375.Oant_2903"/>
<dbReference type="KEGG" id="oan:Oant_2903"/>
<dbReference type="PATRIC" id="fig|439375.7.peg.3050"/>
<dbReference type="eggNOG" id="COG0158">
    <property type="taxonomic scope" value="Bacteria"/>
</dbReference>
<dbReference type="HOGENOM" id="CLU_039977_0_0_5"/>
<dbReference type="PhylomeDB" id="A6X307"/>
<dbReference type="UniPathway" id="UPA00138"/>
<dbReference type="Proteomes" id="UP000002301">
    <property type="component" value="Chromosome 2"/>
</dbReference>
<dbReference type="GO" id="GO:0005829">
    <property type="term" value="C:cytosol"/>
    <property type="evidence" value="ECO:0007669"/>
    <property type="project" value="TreeGrafter"/>
</dbReference>
<dbReference type="GO" id="GO:0042132">
    <property type="term" value="F:fructose 1,6-bisphosphate 1-phosphatase activity"/>
    <property type="evidence" value="ECO:0007669"/>
    <property type="project" value="UniProtKB-UniRule"/>
</dbReference>
<dbReference type="GO" id="GO:0000287">
    <property type="term" value="F:magnesium ion binding"/>
    <property type="evidence" value="ECO:0007669"/>
    <property type="project" value="UniProtKB-UniRule"/>
</dbReference>
<dbReference type="GO" id="GO:0030388">
    <property type="term" value="P:fructose 1,6-bisphosphate metabolic process"/>
    <property type="evidence" value="ECO:0007669"/>
    <property type="project" value="TreeGrafter"/>
</dbReference>
<dbReference type="GO" id="GO:0006002">
    <property type="term" value="P:fructose 6-phosphate metabolic process"/>
    <property type="evidence" value="ECO:0007669"/>
    <property type="project" value="TreeGrafter"/>
</dbReference>
<dbReference type="GO" id="GO:0006000">
    <property type="term" value="P:fructose metabolic process"/>
    <property type="evidence" value="ECO:0007669"/>
    <property type="project" value="TreeGrafter"/>
</dbReference>
<dbReference type="GO" id="GO:0006094">
    <property type="term" value="P:gluconeogenesis"/>
    <property type="evidence" value="ECO:0007669"/>
    <property type="project" value="UniProtKB-UniRule"/>
</dbReference>
<dbReference type="GO" id="GO:0005986">
    <property type="term" value="P:sucrose biosynthetic process"/>
    <property type="evidence" value="ECO:0007669"/>
    <property type="project" value="TreeGrafter"/>
</dbReference>
<dbReference type="CDD" id="cd00354">
    <property type="entry name" value="FBPase"/>
    <property type="match status" value="1"/>
</dbReference>
<dbReference type="Gene3D" id="3.40.190.80">
    <property type="match status" value="1"/>
</dbReference>
<dbReference type="Gene3D" id="3.30.540.10">
    <property type="entry name" value="Fructose-1,6-Bisphosphatase, subunit A, domain 1"/>
    <property type="match status" value="1"/>
</dbReference>
<dbReference type="HAMAP" id="MF_01855">
    <property type="entry name" value="FBPase_class1"/>
    <property type="match status" value="1"/>
</dbReference>
<dbReference type="InterPro" id="IPR044015">
    <property type="entry name" value="FBPase_C_dom"/>
</dbReference>
<dbReference type="InterPro" id="IPR000146">
    <property type="entry name" value="FBPase_class-1"/>
</dbReference>
<dbReference type="InterPro" id="IPR033391">
    <property type="entry name" value="FBPase_N"/>
</dbReference>
<dbReference type="InterPro" id="IPR028343">
    <property type="entry name" value="FBPtase"/>
</dbReference>
<dbReference type="InterPro" id="IPR020548">
    <property type="entry name" value="Fructose_bisphosphatase_AS"/>
</dbReference>
<dbReference type="NCBIfam" id="NF006780">
    <property type="entry name" value="PRK09293.1-4"/>
    <property type="match status" value="1"/>
</dbReference>
<dbReference type="PANTHER" id="PTHR11556">
    <property type="entry name" value="FRUCTOSE-1,6-BISPHOSPHATASE-RELATED"/>
    <property type="match status" value="1"/>
</dbReference>
<dbReference type="PANTHER" id="PTHR11556:SF35">
    <property type="entry name" value="SEDOHEPTULOSE-1,7-BISPHOSPHATASE, CHLOROPLASTIC"/>
    <property type="match status" value="1"/>
</dbReference>
<dbReference type="Pfam" id="PF00316">
    <property type="entry name" value="FBPase"/>
    <property type="match status" value="1"/>
</dbReference>
<dbReference type="Pfam" id="PF18913">
    <property type="entry name" value="FBPase_C"/>
    <property type="match status" value="1"/>
</dbReference>
<dbReference type="PIRSF" id="PIRSF500210">
    <property type="entry name" value="FBPtase"/>
    <property type="match status" value="1"/>
</dbReference>
<dbReference type="PIRSF" id="PIRSF000904">
    <property type="entry name" value="FBPtase_SBPase"/>
    <property type="match status" value="1"/>
</dbReference>
<dbReference type="PRINTS" id="PR00115">
    <property type="entry name" value="F16BPHPHTASE"/>
</dbReference>
<dbReference type="SUPFAM" id="SSF56655">
    <property type="entry name" value="Carbohydrate phosphatase"/>
    <property type="match status" value="1"/>
</dbReference>
<dbReference type="PROSITE" id="PS00124">
    <property type="entry name" value="FBPASE"/>
    <property type="match status" value="1"/>
</dbReference>
<gene>
    <name evidence="1" type="primary">fbp</name>
    <name type="ordered locus">Oant_2903</name>
</gene>
<feature type="chain" id="PRO_0000364618" description="Fructose-1,6-bisphosphatase class 1">
    <location>
        <begin position="1"/>
        <end position="340"/>
    </location>
</feature>
<feature type="binding site" evidence="1">
    <location>
        <position position="107"/>
    </location>
    <ligand>
        <name>Mg(2+)</name>
        <dbReference type="ChEBI" id="CHEBI:18420"/>
        <label>1</label>
    </ligand>
</feature>
<feature type="binding site" evidence="1">
    <location>
        <position position="126"/>
    </location>
    <ligand>
        <name>Mg(2+)</name>
        <dbReference type="ChEBI" id="CHEBI:18420"/>
        <label>1</label>
    </ligand>
</feature>
<feature type="binding site" evidence="1">
    <location>
        <position position="126"/>
    </location>
    <ligand>
        <name>Mg(2+)</name>
        <dbReference type="ChEBI" id="CHEBI:18420"/>
        <label>2</label>
    </ligand>
</feature>
<feature type="binding site" evidence="1">
    <location>
        <position position="128"/>
    </location>
    <ligand>
        <name>Mg(2+)</name>
        <dbReference type="ChEBI" id="CHEBI:18420"/>
        <label>1</label>
    </ligand>
</feature>
<feature type="binding site" evidence="1">
    <location>
        <position position="129"/>
    </location>
    <ligand>
        <name>Mg(2+)</name>
        <dbReference type="ChEBI" id="CHEBI:18420"/>
        <label>2</label>
    </ligand>
</feature>
<feature type="binding site" evidence="1">
    <location>
        <position position="215"/>
    </location>
    <ligand>
        <name>substrate</name>
    </ligand>
</feature>
<feature type="binding site" evidence="1">
    <location>
        <position position="287"/>
    </location>
    <ligand>
        <name>Mg(2+)</name>
        <dbReference type="ChEBI" id="CHEBI:18420"/>
        <label>2</label>
    </ligand>
</feature>
<keyword id="KW-0119">Carbohydrate metabolism</keyword>
<keyword id="KW-0963">Cytoplasm</keyword>
<keyword id="KW-0378">Hydrolase</keyword>
<keyword id="KW-0460">Magnesium</keyword>
<keyword id="KW-0479">Metal-binding</keyword>
<keyword id="KW-1185">Reference proteome</keyword>
<accession>A6X307</accession>
<protein>
    <recommendedName>
        <fullName evidence="1">Fructose-1,6-bisphosphatase class 1</fullName>
        <shortName evidence="1">FBPase class 1</shortName>
        <ecNumber evidence="1">3.1.3.11</ecNumber>
    </recommendedName>
    <alternativeName>
        <fullName evidence="1">D-fructose-1,6-bisphosphate 1-phosphohydrolase class 1</fullName>
    </alternativeName>
</protein>
<sequence length="340" mass="35888">MTMAGNFSPLVLVGDSDRVEAEAVGAYLDNWAGKDGLRLATADAIKAILAGATRLAGRIARGSLPGDPGKLVGVNSDQDQQKCIDVGSHNLFVELLIAAGAASILSEEADLPVAGKADGLIAVAIDPLDGSGNVGLGAPLGTIFSIFPADTAEPFLQPGNRQIAAGYVSFGNSVDLGFSVGEGVIFATFDPASGIFHITRRNVTLPERTSDLAFNASVQRHLSAGMQAYVNDAFLGKDGPRGRNFNMRWLGAAVGDMHRIMQRGGLFFYVNDSRPGYEKGRLRLVYEANPIAFLAREAGGKATDGSRSILDIVPQTYHERSALVFGVAEEVDILGEYFAK</sequence>
<organism>
    <name type="scientific">Brucella anthropi (strain ATCC 49188 / DSM 6882 / CCUG 24695 / JCM 21032 / LMG 3331 / NBRC 15819 / NCTC 12168 / Alc 37)</name>
    <name type="common">Ochrobactrum anthropi</name>
    <dbReference type="NCBI Taxonomy" id="439375"/>
    <lineage>
        <taxon>Bacteria</taxon>
        <taxon>Pseudomonadati</taxon>
        <taxon>Pseudomonadota</taxon>
        <taxon>Alphaproteobacteria</taxon>
        <taxon>Hyphomicrobiales</taxon>
        <taxon>Brucellaceae</taxon>
        <taxon>Brucella/Ochrobactrum group</taxon>
        <taxon>Brucella</taxon>
    </lineage>
</organism>